<reference key="1">
    <citation type="journal article" date="2005" name="J. Bacteriol.">
        <title>Insights on evolution of virulence and resistance from the complete genome analysis of an early methicillin-resistant Staphylococcus aureus strain and a biofilm-producing methicillin-resistant Staphylococcus epidermidis strain.</title>
        <authorList>
            <person name="Gill S.R."/>
            <person name="Fouts D.E."/>
            <person name="Archer G.L."/>
            <person name="Mongodin E.F."/>
            <person name="DeBoy R.T."/>
            <person name="Ravel J."/>
            <person name="Paulsen I.T."/>
            <person name="Kolonay J.F."/>
            <person name="Brinkac L.M."/>
            <person name="Beanan M.J."/>
            <person name="Dodson R.J."/>
            <person name="Daugherty S.C."/>
            <person name="Madupu R."/>
            <person name="Angiuoli S.V."/>
            <person name="Durkin A.S."/>
            <person name="Haft D.H."/>
            <person name="Vamathevan J.J."/>
            <person name="Khouri H."/>
            <person name="Utterback T.R."/>
            <person name="Lee C."/>
            <person name="Dimitrov G."/>
            <person name="Jiang L."/>
            <person name="Qin H."/>
            <person name="Weidman J."/>
            <person name="Tran K."/>
            <person name="Kang K.H."/>
            <person name="Hance I.R."/>
            <person name="Nelson K.E."/>
            <person name="Fraser C.M."/>
        </authorList>
    </citation>
    <scope>NUCLEOTIDE SEQUENCE [LARGE SCALE GENOMIC DNA]</scope>
    <source>
        <strain>ATCC 35984 / DSM 28319 / BCRC 17069 / CCUG 31568 / BM 3577 / RP62A</strain>
    </source>
</reference>
<dbReference type="EC" id="1.3.98.5" evidence="1"/>
<dbReference type="EMBL" id="CP000029">
    <property type="protein sequence ID" value="AAW53622.1"/>
    <property type="molecule type" value="Genomic_DNA"/>
</dbReference>
<dbReference type="SMR" id="Q5HRF8"/>
<dbReference type="STRING" id="176279.SERP0235"/>
<dbReference type="KEGG" id="ser:SERP0235"/>
<dbReference type="eggNOG" id="COG3253">
    <property type="taxonomic scope" value="Bacteria"/>
</dbReference>
<dbReference type="HOGENOM" id="CLU_063226_1_0_9"/>
<dbReference type="UniPathway" id="UPA00252"/>
<dbReference type="Proteomes" id="UP000000531">
    <property type="component" value="Chromosome"/>
</dbReference>
<dbReference type="GO" id="GO:0020037">
    <property type="term" value="F:heme binding"/>
    <property type="evidence" value="ECO:0007669"/>
    <property type="project" value="InterPro"/>
</dbReference>
<dbReference type="GO" id="GO:0046872">
    <property type="term" value="F:metal ion binding"/>
    <property type="evidence" value="ECO:0007669"/>
    <property type="project" value="UniProtKB-KW"/>
</dbReference>
<dbReference type="GO" id="GO:0016634">
    <property type="term" value="F:oxidoreductase activity, acting on the CH-CH group of donors, oxygen as acceptor"/>
    <property type="evidence" value="ECO:0007669"/>
    <property type="project" value="UniProtKB-UniRule"/>
</dbReference>
<dbReference type="GO" id="GO:0004601">
    <property type="term" value="F:peroxidase activity"/>
    <property type="evidence" value="ECO:0007669"/>
    <property type="project" value="InterPro"/>
</dbReference>
<dbReference type="GO" id="GO:0006785">
    <property type="term" value="P:heme B biosynthetic process"/>
    <property type="evidence" value="ECO:0007669"/>
    <property type="project" value="UniProtKB-UniRule"/>
</dbReference>
<dbReference type="Gene3D" id="3.30.70.1030">
    <property type="entry name" value="Apc35880, domain 1"/>
    <property type="match status" value="2"/>
</dbReference>
<dbReference type="HAMAP" id="MF_01442">
    <property type="entry name" value="Coproheme_decarbox_1"/>
    <property type="match status" value="1"/>
</dbReference>
<dbReference type="InterPro" id="IPR031332">
    <property type="entry name" value="CHDC"/>
</dbReference>
<dbReference type="InterPro" id="IPR010644">
    <property type="entry name" value="ChdC/CLD"/>
</dbReference>
<dbReference type="InterPro" id="IPR011008">
    <property type="entry name" value="Dimeric_a/b-barrel"/>
</dbReference>
<dbReference type="NCBIfam" id="NF008913">
    <property type="entry name" value="PRK12276.1"/>
    <property type="match status" value="1"/>
</dbReference>
<dbReference type="PANTHER" id="PTHR36843:SF1">
    <property type="entry name" value="COPROHEME DECARBOXYLASE"/>
    <property type="match status" value="1"/>
</dbReference>
<dbReference type="PANTHER" id="PTHR36843">
    <property type="entry name" value="HEME-DEPENDENT PEROXIDASE YWFI-RELATED"/>
    <property type="match status" value="1"/>
</dbReference>
<dbReference type="Pfam" id="PF06778">
    <property type="entry name" value="Chlor_dismutase"/>
    <property type="match status" value="1"/>
</dbReference>
<dbReference type="SUPFAM" id="SSF54909">
    <property type="entry name" value="Dimeric alpha+beta barrel"/>
    <property type="match status" value="1"/>
</dbReference>
<comment type="function">
    <text evidence="1">Involved in coproporphyrin-dependent heme b biosynthesis. Catalyzes the decarboxylation of Fe-coproporphyrin III (coproheme) to heme b (protoheme IX), the last step of the pathway. The reaction occurs in a stepwise manner with a three-propionate intermediate.</text>
</comment>
<comment type="catalytic activity">
    <reaction evidence="1">
        <text>Fe-coproporphyrin III + 2 H2O2 + 2 H(+) = heme b + 2 CO2 + 4 H2O</text>
        <dbReference type="Rhea" id="RHEA:56516"/>
        <dbReference type="ChEBI" id="CHEBI:15377"/>
        <dbReference type="ChEBI" id="CHEBI:15378"/>
        <dbReference type="ChEBI" id="CHEBI:16240"/>
        <dbReference type="ChEBI" id="CHEBI:16526"/>
        <dbReference type="ChEBI" id="CHEBI:60344"/>
        <dbReference type="ChEBI" id="CHEBI:68438"/>
        <dbReference type="EC" id="1.3.98.5"/>
    </reaction>
    <physiologicalReaction direction="left-to-right" evidence="1">
        <dbReference type="Rhea" id="RHEA:56517"/>
    </physiologicalReaction>
</comment>
<comment type="catalytic activity">
    <reaction evidence="1">
        <text>Fe-coproporphyrin III + H2O2 + H(+) = harderoheme III + CO2 + 2 H2O</text>
        <dbReference type="Rhea" id="RHEA:57940"/>
        <dbReference type="ChEBI" id="CHEBI:15377"/>
        <dbReference type="ChEBI" id="CHEBI:15378"/>
        <dbReference type="ChEBI" id="CHEBI:16240"/>
        <dbReference type="ChEBI" id="CHEBI:16526"/>
        <dbReference type="ChEBI" id="CHEBI:68438"/>
        <dbReference type="ChEBI" id="CHEBI:142463"/>
    </reaction>
    <physiologicalReaction direction="left-to-right" evidence="1">
        <dbReference type="Rhea" id="RHEA:57941"/>
    </physiologicalReaction>
</comment>
<comment type="catalytic activity">
    <reaction evidence="1">
        <text>harderoheme III + H2O2 + H(+) = heme b + CO2 + 2 H2O</text>
        <dbReference type="Rhea" id="RHEA:57944"/>
        <dbReference type="ChEBI" id="CHEBI:15377"/>
        <dbReference type="ChEBI" id="CHEBI:15378"/>
        <dbReference type="ChEBI" id="CHEBI:16240"/>
        <dbReference type="ChEBI" id="CHEBI:16526"/>
        <dbReference type="ChEBI" id="CHEBI:60344"/>
        <dbReference type="ChEBI" id="CHEBI:142463"/>
    </reaction>
    <physiologicalReaction direction="left-to-right" evidence="1">
        <dbReference type="Rhea" id="RHEA:57945"/>
    </physiologicalReaction>
</comment>
<comment type="cofactor">
    <cofactor evidence="1">
        <name>Fe-coproporphyrin III</name>
        <dbReference type="ChEBI" id="CHEBI:68438"/>
    </cofactor>
    <text evidence="1">Fe-coproporphyrin III acts both as a substrate and a redox cofactor.</text>
</comment>
<comment type="pathway">
    <text evidence="1">Porphyrin-containing compound metabolism; protoheme biosynthesis.</text>
</comment>
<comment type="similarity">
    <text evidence="1">Belongs to the ChdC family. Type 1 subfamily.</text>
</comment>
<name>CHDC_STAEQ</name>
<accession>Q5HRF8</accession>
<keyword id="KW-0349">Heme</keyword>
<keyword id="KW-0350">Heme biosynthesis</keyword>
<keyword id="KW-0408">Iron</keyword>
<keyword id="KW-0479">Metal-binding</keyword>
<keyword id="KW-0560">Oxidoreductase</keyword>
<keyword id="KW-1185">Reference proteome</keyword>
<sequence length="249" mass="29541">MSEAAETLDGWYSLHLFYAVDWTTFRLIAEDDREAMITELETFVKDKAVARESHQGDHAIYNITGQKADLLLWFLRPEMKELNQIENEFNKLRIADYLIPTYSYVSVIELSNYLAGKSDEDPYENPHVKARLYPELPHSEYICFYPMDKRRNETYNWYMLPIEDRKTLMYNHGMIGRKYAGKIKQFITGSVGFDDYEWGVTLFSNDVLQFKKIVYEMRFDETTARYGEFGSFYIGHILNIEDFKQFFSI</sequence>
<evidence type="ECO:0000255" key="1">
    <source>
        <dbReference type="HAMAP-Rule" id="MF_01442"/>
    </source>
</evidence>
<proteinExistence type="inferred from homology"/>
<gene>
    <name evidence="1" type="primary">chdC</name>
    <name type="ordered locus">SERP0235</name>
</gene>
<feature type="chain" id="PRO_0000294054" description="Coproheme decarboxylase">
    <location>
        <begin position="1"/>
        <end position="249"/>
    </location>
</feature>
<feature type="active site" evidence="1">
    <location>
        <position position="145"/>
    </location>
</feature>
<feature type="binding site" evidence="1">
    <location>
        <position position="131"/>
    </location>
    <ligand>
        <name>Fe-coproporphyrin III</name>
        <dbReference type="ChEBI" id="CHEBI:68438"/>
    </ligand>
</feature>
<feature type="binding site" evidence="1">
    <location>
        <begin position="145"/>
        <end position="149"/>
    </location>
    <ligand>
        <name>Fe-coproporphyrin III</name>
        <dbReference type="ChEBI" id="CHEBI:68438"/>
    </ligand>
</feature>
<feature type="binding site" description="axial binding residue" evidence="1">
    <location>
        <position position="172"/>
    </location>
    <ligand>
        <name>Fe-coproporphyrin III</name>
        <dbReference type="ChEBI" id="CHEBI:68438"/>
    </ligand>
    <ligandPart>
        <name>Fe</name>
        <dbReference type="ChEBI" id="CHEBI:18248"/>
    </ligandPart>
</feature>
<feature type="binding site" evidence="1">
    <location>
        <position position="185"/>
    </location>
    <ligand>
        <name>Fe-coproporphyrin III</name>
        <dbReference type="ChEBI" id="CHEBI:68438"/>
    </ligand>
</feature>
<organism>
    <name type="scientific">Staphylococcus epidermidis (strain ATCC 35984 / DSM 28319 / BCRC 17069 / CCUG 31568 / BM 3577 / RP62A)</name>
    <dbReference type="NCBI Taxonomy" id="176279"/>
    <lineage>
        <taxon>Bacteria</taxon>
        <taxon>Bacillati</taxon>
        <taxon>Bacillota</taxon>
        <taxon>Bacilli</taxon>
        <taxon>Bacillales</taxon>
        <taxon>Staphylococcaceae</taxon>
        <taxon>Staphylococcus</taxon>
    </lineage>
</organism>
<protein>
    <recommendedName>
        <fullName evidence="1">Coproheme decarboxylase</fullName>
        <ecNumber evidence="1">1.3.98.5</ecNumber>
    </recommendedName>
    <alternativeName>
        <fullName evidence="1">Coproheme III oxidative decarboxylase</fullName>
    </alternativeName>
    <alternativeName>
        <fullName evidence="1">Hydrogen peroxide-dependent heme synthase</fullName>
    </alternativeName>
</protein>